<comment type="function">
    <text evidence="1">Catalyzes the hydrolysis of GTP bound to the 40S ribosomal initiation complex (40S.mRNA.Met-tRNA[F].eIF-2.GTP) with the subsequent joining of a 60S ribosomal subunit resulting in the release of eIF-2 and the guanine nucleotide. The subsequent joining of a 60S ribosomal subunit results in the formation of a functional 80S initiation complex (80S.mRNA.Met-tRNA[F]) (By similarity).</text>
</comment>
<comment type="similarity">
    <text evidence="3">Belongs to the eIF-2-beta/eIF-5 family.</text>
</comment>
<dbReference type="EMBL" id="Z69735">
    <property type="protein sequence ID" value="CAA93623.1"/>
    <property type="molecule type" value="mRNA"/>
</dbReference>
<dbReference type="SMR" id="Q26891"/>
<dbReference type="eggNOG" id="KOG2767">
    <property type="taxonomic scope" value="Eukaryota"/>
</dbReference>
<dbReference type="HOGENOM" id="CLU_026663_1_0_1"/>
<dbReference type="GO" id="GO:0005525">
    <property type="term" value="F:GTP binding"/>
    <property type="evidence" value="ECO:0007669"/>
    <property type="project" value="UniProtKB-KW"/>
</dbReference>
<dbReference type="GO" id="GO:0003743">
    <property type="term" value="F:translation initiation factor activity"/>
    <property type="evidence" value="ECO:0007669"/>
    <property type="project" value="UniProtKB-KW"/>
</dbReference>
<dbReference type="FunFam" id="2.20.25.350:FF:000001">
    <property type="entry name" value="Eukaryotic translation initiation factor 5"/>
    <property type="match status" value="1"/>
</dbReference>
<dbReference type="Gene3D" id="2.20.25.350">
    <property type="match status" value="1"/>
</dbReference>
<dbReference type="InterPro" id="IPR045196">
    <property type="entry name" value="IF2/IF5"/>
</dbReference>
<dbReference type="InterPro" id="IPR002735">
    <property type="entry name" value="Transl_init_fac_IF2/IF5_dom"/>
</dbReference>
<dbReference type="InterPro" id="IPR016190">
    <property type="entry name" value="Transl_init_fac_IF2/IF5_Zn-bd"/>
</dbReference>
<dbReference type="PANTHER" id="PTHR23001">
    <property type="entry name" value="EUKARYOTIC TRANSLATION INITIATION FACTOR"/>
    <property type="match status" value="1"/>
</dbReference>
<dbReference type="PANTHER" id="PTHR23001:SF7">
    <property type="entry name" value="EUKARYOTIC TRANSLATION INITIATION FACTOR 5"/>
    <property type="match status" value="1"/>
</dbReference>
<dbReference type="Pfam" id="PF01873">
    <property type="entry name" value="eIF-5_eIF-2B"/>
    <property type="match status" value="1"/>
</dbReference>
<dbReference type="SUPFAM" id="SSF75689">
    <property type="entry name" value="Zinc-binding domain of translation initiation factor 2 beta"/>
    <property type="match status" value="1"/>
</dbReference>
<keyword id="KW-0342">GTP-binding</keyword>
<keyword id="KW-0396">Initiation factor</keyword>
<keyword id="KW-0547">Nucleotide-binding</keyword>
<keyword id="KW-0648">Protein biosynthesis</keyword>
<sequence length="162" mass="18145">VLLDGFIRKFVLCPECENPETELLVSTKRSTISQGCKACGYHSPLESNHKLVTFILKNPPNLNPAVQGSSLTEGKRSKRSKRPNGDTNGDTSQVDDQNESLEASVNENSKNGDDDEGHEWQADVSEEAVRARMQDLTEGAKNMTINDDLEKREKDRMDIFYE</sequence>
<protein>
    <recommendedName>
        <fullName>Eukaryotic translation initiation factor 5</fullName>
        <shortName>eIF-5</shortName>
    </recommendedName>
</protein>
<feature type="chain" id="PRO_0000212521" description="Eukaryotic translation initiation factor 5">
    <location>
        <begin position="1" status="less than"/>
        <end position="162" status="greater than"/>
    </location>
</feature>
<feature type="region of interest" description="Disordered" evidence="2">
    <location>
        <begin position="59"/>
        <end position="162"/>
    </location>
</feature>
<feature type="compositionally biased region" description="Polar residues" evidence="2">
    <location>
        <begin position="85"/>
        <end position="109"/>
    </location>
</feature>
<feature type="compositionally biased region" description="Basic and acidic residues" evidence="2">
    <location>
        <begin position="148"/>
        <end position="162"/>
    </location>
</feature>
<feature type="non-terminal residue">
    <location>
        <position position="1"/>
    </location>
</feature>
<feature type="non-terminal residue">
    <location>
        <position position="162"/>
    </location>
</feature>
<accession>Q26891</accession>
<proteinExistence type="evidence at transcript level"/>
<name>IF5_TRICA</name>
<evidence type="ECO:0000250" key="1"/>
<evidence type="ECO:0000256" key="2">
    <source>
        <dbReference type="SAM" id="MobiDB-lite"/>
    </source>
</evidence>
<evidence type="ECO:0000305" key="3"/>
<organism>
    <name type="scientific">Tribolium castaneum</name>
    <name type="common">Red flour beetle</name>
    <dbReference type="NCBI Taxonomy" id="7070"/>
    <lineage>
        <taxon>Eukaryota</taxon>
        <taxon>Metazoa</taxon>
        <taxon>Ecdysozoa</taxon>
        <taxon>Arthropoda</taxon>
        <taxon>Hexapoda</taxon>
        <taxon>Insecta</taxon>
        <taxon>Pterygota</taxon>
        <taxon>Neoptera</taxon>
        <taxon>Endopterygota</taxon>
        <taxon>Coleoptera</taxon>
        <taxon>Polyphaga</taxon>
        <taxon>Cucujiformia</taxon>
        <taxon>Tenebrionidae</taxon>
        <taxon>Tenebrionidae incertae sedis</taxon>
        <taxon>Tribolium</taxon>
    </lineage>
</organism>
<reference key="1">
    <citation type="submission" date="1996-02" db="EMBL/GenBank/DDBJ databases">
        <title>The eukaryotic translation initiation factor 5 corresponds to one gene differentially expressed during the ontogeny of red flour beetle (Tribolium castaneum Herbst; Coleoptera, Tenebrionidae).</title>
        <authorList>
            <person name="Braet Y."/>
            <person name="Haubruge E."/>
            <person name="Kettmann R."/>
            <person name="Gaspar C."/>
            <person name="Burny A."/>
        </authorList>
    </citation>
    <scope>NUCLEOTIDE SEQUENCE [MRNA]</scope>
    <source>
        <strain>PRM</strain>
    </source>
</reference>